<organism>
    <name type="scientific">Vibrio atlanticus (strain LGP32)</name>
    <name type="common">Vibrio splendidus (strain Mel32)</name>
    <dbReference type="NCBI Taxonomy" id="575788"/>
    <lineage>
        <taxon>Bacteria</taxon>
        <taxon>Pseudomonadati</taxon>
        <taxon>Pseudomonadota</taxon>
        <taxon>Gammaproteobacteria</taxon>
        <taxon>Vibrionales</taxon>
        <taxon>Vibrionaceae</taxon>
        <taxon>Vibrio</taxon>
    </lineage>
</organism>
<reference key="1">
    <citation type="submission" date="2009-02" db="EMBL/GenBank/DDBJ databases">
        <title>Vibrio splendidus str. LGP32 complete genome.</title>
        <authorList>
            <person name="Mazel D."/>
            <person name="Le Roux F."/>
        </authorList>
    </citation>
    <scope>NUCLEOTIDE SEQUENCE [LARGE SCALE GENOMIC DNA]</scope>
    <source>
        <strain>LGP32</strain>
    </source>
</reference>
<proteinExistence type="inferred from homology"/>
<feature type="chain" id="PRO_1000147437" description="Elongation factor P-like protein">
    <location>
        <begin position="1"/>
        <end position="189"/>
    </location>
</feature>
<name>EFPL_VIBA3</name>
<accession>B7VGT7</accession>
<protein>
    <recommendedName>
        <fullName evidence="1">Elongation factor P-like protein</fullName>
    </recommendedName>
</protein>
<comment type="similarity">
    <text evidence="1">Belongs to the elongation factor P family.</text>
</comment>
<evidence type="ECO:0000255" key="1">
    <source>
        <dbReference type="HAMAP-Rule" id="MF_00646"/>
    </source>
</evidence>
<gene>
    <name type="ordered locus">VS_1959</name>
</gene>
<dbReference type="EMBL" id="FM954972">
    <property type="protein sequence ID" value="CAV19137.1"/>
    <property type="molecule type" value="Genomic_DNA"/>
</dbReference>
<dbReference type="SMR" id="B7VGT7"/>
<dbReference type="STRING" id="575788.VS_1959"/>
<dbReference type="KEGG" id="vsp:VS_1959"/>
<dbReference type="eggNOG" id="COG0231">
    <property type="taxonomic scope" value="Bacteria"/>
</dbReference>
<dbReference type="HOGENOM" id="CLU_074944_2_0_6"/>
<dbReference type="Proteomes" id="UP000009100">
    <property type="component" value="Chromosome 1"/>
</dbReference>
<dbReference type="GO" id="GO:0005737">
    <property type="term" value="C:cytoplasm"/>
    <property type="evidence" value="ECO:0007669"/>
    <property type="project" value="InterPro"/>
</dbReference>
<dbReference type="GO" id="GO:0003746">
    <property type="term" value="F:translation elongation factor activity"/>
    <property type="evidence" value="ECO:0007669"/>
    <property type="project" value="UniProtKB-UniRule"/>
</dbReference>
<dbReference type="GO" id="GO:0043043">
    <property type="term" value="P:peptide biosynthetic process"/>
    <property type="evidence" value="ECO:0007669"/>
    <property type="project" value="InterPro"/>
</dbReference>
<dbReference type="CDD" id="cd04470">
    <property type="entry name" value="S1_EF-P_repeat_1"/>
    <property type="match status" value="1"/>
</dbReference>
<dbReference type="CDD" id="cd05794">
    <property type="entry name" value="S1_EF-P_repeat_2"/>
    <property type="match status" value="1"/>
</dbReference>
<dbReference type="FunFam" id="2.40.50.140:FF:000004">
    <property type="entry name" value="Elongation factor P"/>
    <property type="match status" value="1"/>
</dbReference>
<dbReference type="Gene3D" id="2.30.30.30">
    <property type="match status" value="1"/>
</dbReference>
<dbReference type="Gene3D" id="2.40.50.140">
    <property type="entry name" value="Nucleic acid-binding proteins"/>
    <property type="match status" value="2"/>
</dbReference>
<dbReference type="HAMAP" id="MF_00646">
    <property type="entry name" value="EFP"/>
    <property type="match status" value="1"/>
</dbReference>
<dbReference type="InterPro" id="IPR015365">
    <property type="entry name" value="Elong-fact-P_C"/>
</dbReference>
<dbReference type="InterPro" id="IPR012340">
    <property type="entry name" value="NA-bd_OB-fold"/>
</dbReference>
<dbReference type="InterPro" id="IPR014722">
    <property type="entry name" value="Rib_uL2_dom2"/>
</dbReference>
<dbReference type="InterPro" id="IPR020599">
    <property type="entry name" value="Transl_elong_fac_P/YeiP"/>
</dbReference>
<dbReference type="InterPro" id="IPR013185">
    <property type="entry name" value="Transl_elong_KOW-like"/>
</dbReference>
<dbReference type="InterPro" id="IPR011897">
    <property type="entry name" value="Transl_elong_p-like_YeiP"/>
</dbReference>
<dbReference type="InterPro" id="IPR001059">
    <property type="entry name" value="Transl_elong_P/YeiP_cen"/>
</dbReference>
<dbReference type="InterPro" id="IPR013852">
    <property type="entry name" value="Transl_elong_P/YeiP_CS"/>
</dbReference>
<dbReference type="InterPro" id="IPR008991">
    <property type="entry name" value="Translation_prot_SH3-like_sf"/>
</dbReference>
<dbReference type="NCBIfam" id="NF001810">
    <property type="entry name" value="PRK00529.1"/>
    <property type="match status" value="1"/>
</dbReference>
<dbReference type="NCBIfam" id="NF003392">
    <property type="entry name" value="PRK04542.1"/>
    <property type="match status" value="1"/>
</dbReference>
<dbReference type="NCBIfam" id="TIGR02178">
    <property type="entry name" value="yeiP"/>
    <property type="match status" value="1"/>
</dbReference>
<dbReference type="PANTHER" id="PTHR30053">
    <property type="entry name" value="ELONGATION FACTOR P"/>
    <property type="match status" value="1"/>
</dbReference>
<dbReference type="PANTHER" id="PTHR30053:SF14">
    <property type="entry name" value="TRANSLATION ELONGATION FACTOR KOW-LIKE DOMAIN-CONTAINING PROTEIN"/>
    <property type="match status" value="1"/>
</dbReference>
<dbReference type="Pfam" id="PF01132">
    <property type="entry name" value="EFP"/>
    <property type="match status" value="1"/>
</dbReference>
<dbReference type="Pfam" id="PF08207">
    <property type="entry name" value="EFP_N"/>
    <property type="match status" value="1"/>
</dbReference>
<dbReference type="Pfam" id="PF09285">
    <property type="entry name" value="Elong-fact-P_C"/>
    <property type="match status" value="1"/>
</dbReference>
<dbReference type="PIRSF" id="PIRSF005901">
    <property type="entry name" value="EF-P"/>
    <property type="match status" value="1"/>
</dbReference>
<dbReference type="SMART" id="SM01185">
    <property type="entry name" value="EFP"/>
    <property type="match status" value="1"/>
</dbReference>
<dbReference type="SMART" id="SM00841">
    <property type="entry name" value="Elong-fact-P_C"/>
    <property type="match status" value="1"/>
</dbReference>
<dbReference type="SUPFAM" id="SSF50249">
    <property type="entry name" value="Nucleic acid-binding proteins"/>
    <property type="match status" value="2"/>
</dbReference>
<dbReference type="SUPFAM" id="SSF50104">
    <property type="entry name" value="Translation proteins SH3-like domain"/>
    <property type="match status" value="1"/>
</dbReference>
<dbReference type="PROSITE" id="PS01275">
    <property type="entry name" value="EFP"/>
    <property type="match status" value="1"/>
</dbReference>
<sequence>MPRASEIKKGFAINVDGKTVLVKDIEVTTPGGRGGQKIYRFRGHDVATGVKTEVRHKADEIVETIDVTKRAVMFSYVDGNEYIFMDNEDYTQFIFNGEMIEDELLFINEDTQGMYAILIDGTAATLELPTSVELVIEETDPSIKGASASARTKPARLSTGLTVQVPEYIATGDKVVVNTAERKYMNRAS</sequence>